<name>CCMD_PARDP</name>
<comment type="function">
    <text evidence="2">Required for the export of heme to the periplasm for the biogenesis of c-type cytochromes.</text>
</comment>
<comment type="subcellular location">
    <subcellularLocation>
        <location evidence="2">Cell inner membrane</location>
        <topology evidence="2">Single-pass membrane protein</topology>
    </subcellularLocation>
</comment>
<comment type="similarity">
    <text evidence="2">Belongs to the CcmD/CycX/HelD family.</text>
</comment>
<reference key="1">
    <citation type="journal article" date="1997" name="Mol. Microbiol.">
        <title>Paracoccus denitrificans CcmG is a periplasmic protein-disulphide oxidoreductase required for c- and aa3-type cytochrome biogenesis; evidence for a reductase role in vivo.</title>
        <authorList>
            <person name="Page M.D."/>
            <person name="Ferguson S.J."/>
        </authorList>
    </citation>
    <scope>NUCLEOTIDE SEQUENCE [GENOMIC DNA]</scope>
</reference>
<reference key="2">
    <citation type="submission" date="2006-12" db="EMBL/GenBank/DDBJ databases">
        <title>Complete sequence of chromosome 1 of Paracoccus denitrificans PD1222.</title>
        <authorList>
            <person name="Copeland A."/>
            <person name="Lucas S."/>
            <person name="Lapidus A."/>
            <person name="Barry K."/>
            <person name="Detter J.C."/>
            <person name="Glavina del Rio T."/>
            <person name="Hammon N."/>
            <person name="Israni S."/>
            <person name="Dalin E."/>
            <person name="Tice H."/>
            <person name="Pitluck S."/>
            <person name="Munk A.C."/>
            <person name="Brettin T."/>
            <person name="Bruce D."/>
            <person name="Han C."/>
            <person name="Tapia R."/>
            <person name="Gilna P."/>
            <person name="Schmutz J."/>
            <person name="Larimer F."/>
            <person name="Land M."/>
            <person name="Hauser L."/>
            <person name="Kyrpides N."/>
            <person name="Lykidis A."/>
            <person name="Spiro S."/>
            <person name="Richardson D.J."/>
            <person name="Moir J.W.B."/>
            <person name="Ferguson S.J."/>
            <person name="van Spanning R.J.M."/>
            <person name="Richardson P."/>
        </authorList>
    </citation>
    <scope>NUCLEOTIDE SEQUENCE [LARGE SCALE GENOMIC DNA]</scope>
    <source>
        <strain>Pd 1222</strain>
    </source>
</reference>
<gene>
    <name type="primary">ccmD</name>
    <name type="ordered locus">Pden_1410.1</name>
</gene>
<organism>
    <name type="scientific">Paracoccus denitrificans (strain Pd 1222)</name>
    <dbReference type="NCBI Taxonomy" id="318586"/>
    <lineage>
        <taxon>Bacteria</taxon>
        <taxon>Pseudomonadati</taxon>
        <taxon>Pseudomonadota</taxon>
        <taxon>Alphaproteobacteria</taxon>
        <taxon>Rhodobacterales</taxon>
        <taxon>Paracoccaceae</taxon>
        <taxon>Paracoccus</taxon>
    </lineage>
</organism>
<keyword id="KW-0997">Cell inner membrane</keyword>
<keyword id="KW-1003">Cell membrane</keyword>
<keyword id="KW-0201">Cytochrome c-type biogenesis</keyword>
<keyword id="KW-0472">Membrane</keyword>
<keyword id="KW-1185">Reference proteome</keyword>
<keyword id="KW-0812">Transmembrane</keyword>
<keyword id="KW-1133">Transmembrane helix</keyword>
<keyword id="KW-0813">Transport</keyword>
<proteinExistence type="inferred from homology"/>
<protein>
    <recommendedName>
        <fullName>Heme exporter protein D</fullName>
    </recommendedName>
    <alternativeName>
        <fullName>Cytochrome c-type biogenesis protein CcmD</fullName>
    </alternativeName>
</protein>
<sequence>MTELGKYAGTVLAAYGASLVLLIGIVVQTVLANARARRELQEHERRG</sequence>
<evidence type="ECO:0000255" key="1"/>
<evidence type="ECO:0000305" key="2"/>
<accession>P52221</accession>
<feature type="chain" id="PRO_0000201569" description="Heme exporter protein D">
    <location>
        <begin position="1"/>
        <end position="47"/>
    </location>
</feature>
<feature type="transmembrane region" description="Helical" evidence="1">
    <location>
        <begin position="7"/>
        <end position="27"/>
    </location>
</feature>
<dbReference type="EMBL" id="Z71971">
    <property type="protein sequence ID" value="CAA96496.1"/>
    <property type="molecule type" value="Genomic_DNA"/>
</dbReference>
<dbReference type="EMBL" id="CP000489">
    <property type="status" value="NOT_ANNOTATED_CDS"/>
    <property type="molecule type" value="Genomic_DNA"/>
</dbReference>
<dbReference type="RefSeq" id="WP_041529845.1">
    <property type="nucleotide sequence ID" value="NC_008686.1"/>
</dbReference>
<dbReference type="SMR" id="P52221"/>
<dbReference type="GeneID" id="93449882"/>
<dbReference type="OrthoDB" id="7874534at2"/>
<dbReference type="Proteomes" id="UP000000361">
    <property type="component" value="Chromosome 1"/>
</dbReference>
<dbReference type="GO" id="GO:0005886">
    <property type="term" value="C:plasma membrane"/>
    <property type="evidence" value="ECO:0007669"/>
    <property type="project" value="UniProtKB-SubCell"/>
</dbReference>
<dbReference type="GO" id="GO:0017004">
    <property type="term" value="P:cytochrome complex assembly"/>
    <property type="evidence" value="ECO:0007669"/>
    <property type="project" value="UniProtKB-KW"/>
</dbReference>
<dbReference type="GO" id="GO:0015886">
    <property type="term" value="P:heme transport"/>
    <property type="evidence" value="ECO:0007669"/>
    <property type="project" value="InterPro"/>
</dbReference>
<dbReference type="InterPro" id="IPR007078">
    <property type="entry name" value="Haem_export_protD_CcmD"/>
</dbReference>
<dbReference type="NCBIfam" id="TIGR03141">
    <property type="entry name" value="cytochro_ccmD"/>
    <property type="match status" value="1"/>
</dbReference>
<dbReference type="Pfam" id="PF04995">
    <property type="entry name" value="CcmD"/>
    <property type="match status" value="1"/>
</dbReference>